<sequence>MGVELGSNSEVGALRVVILHRPGAELRRLTPRNTDQLLFDGLPWVSRAQDEHDEFAELLASRGAEVLLLSDLLTEALHHSGAARMQGIAAAVDAPRLGLPLAQELSAYLRSLDPGRLAHVLTAGMTFNELPSDTRTDVSLVLRMHHGGDFVIEPLPNLVFTRDSSIWIGPRVVIPSLALRARVREASLTDLIYAHHPRFTGVRRAYESRTAPVEGGDVLLLAPGVVAVGVGERTTPAGAEALARSLFDDDLAHTVLAVPIAQQRAQMHLDTVCTMVDTDTMVMYANVVDTLEAFTIQRTPDGVTIGDAAPFAEAAAKAMGIDKLRVIHTGMDPVVAEREQWDDGNNTLALAPGVVVAYERNVQTNARLQDAGIEVLTIAGSELGTGRGGPRCMSCPAARDPL</sequence>
<name>ARCA_MYCTA</name>
<reference key="1">
    <citation type="journal article" date="2008" name="PLoS ONE">
        <title>Genetic basis of virulence attenuation revealed by comparative genomic analysis of Mycobacterium tuberculosis strain H37Ra versus H37Rv.</title>
        <authorList>
            <person name="Zheng H."/>
            <person name="Lu L."/>
            <person name="Wang B."/>
            <person name="Pu S."/>
            <person name="Zhang X."/>
            <person name="Zhu G."/>
            <person name="Shi W."/>
            <person name="Zhang L."/>
            <person name="Wang H."/>
            <person name="Wang S."/>
            <person name="Zhao G."/>
            <person name="Zhang Y."/>
        </authorList>
    </citation>
    <scope>NUCLEOTIDE SEQUENCE [LARGE SCALE GENOMIC DNA]</scope>
    <source>
        <strain>ATCC 25177 / H37Ra</strain>
    </source>
</reference>
<dbReference type="EC" id="3.5.3.6" evidence="1"/>
<dbReference type="EMBL" id="CP000611">
    <property type="protein sequence ID" value="ABQ72744.1"/>
    <property type="molecule type" value="Genomic_DNA"/>
</dbReference>
<dbReference type="RefSeq" id="WP_003405169.1">
    <property type="nucleotide sequence ID" value="NZ_CP016972.1"/>
</dbReference>
<dbReference type="SMR" id="A5U144"/>
<dbReference type="GeneID" id="45424973"/>
<dbReference type="KEGG" id="mra:MRA_1010"/>
<dbReference type="eggNOG" id="COG2235">
    <property type="taxonomic scope" value="Bacteria"/>
</dbReference>
<dbReference type="HOGENOM" id="CLU_052662_0_1_11"/>
<dbReference type="UniPathway" id="UPA00254">
    <property type="reaction ID" value="UER00364"/>
</dbReference>
<dbReference type="Proteomes" id="UP000001988">
    <property type="component" value="Chromosome"/>
</dbReference>
<dbReference type="GO" id="GO:0005737">
    <property type="term" value="C:cytoplasm"/>
    <property type="evidence" value="ECO:0007669"/>
    <property type="project" value="UniProtKB-SubCell"/>
</dbReference>
<dbReference type="GO" id="GO:0016990">
    <property type="term" value="F:arginine deiminase activity"/>
    <property type="evidence" value="ECO:0007669"/>
    <property type="project" value="UniProtKB-UniRule"/>
</dbReference>
<dbReference type="GO" id="GO:0019547">
    <property type="term" value="P:arginine catabolic process to ornithine"/>
    <property type="evidence" value="ECO:0007669"/>
    <property type="project" value="UniProtKB-UniRule"/>
</dbReference>
<dbReference type="GO" id="GO:0019546">
    <property type="term" value="P:arginine deiminase pathway"/>
    <property type="evidence" value="ECO:0007669"/>
    <property type="project" value="TreeGrafter"/>
</dbReference>
<dbReference type="FunFam" id="1.10.3930.10:FF:000004">
    <property type="entry name" value="Arginine deiminase"/>
    <property type="match status" value="1"/>
</dbReference>
<dbReference type="Gene3D" id="1.10.3930.10">
    <property type="entry name" value="Arginine deiminase"/>
    <property type="match status" value="1"/>
</dbReference>
<dbReference type="Gene3D" id="3.75.10.10">
    <property type="entry name" value="L-arginine/glycine Amidinotransferase, Chain A"/>
    <property type="match status" value="1"/>
</dbReference>
<dbReference type="HAMAP" id="MF_00242">
    <property type="entry name" value="Arg_deiminase"/>
    <property type="match status" value="1"/>
</dbReference>
<dbReference type="InterPro" id="IPR003876">
    <property type="entry name" value="Arg_deiminase"/>
</dbReference>
<dbReference type="NCBIfam" id="TIGR01078">
    <property type="entry name" value="arcA"/>
    <property type="match status" value="1"/>
</dbReference>
<dbReference type="NCBIfam" id="NF002381">
    <property type="entry name" value="PRK01388.1"/>
    <property type="match status" value="1"/>
</dbReference>
<dbReference type="PANTHER" id="PTHR47271">
    <property type="entry name" value="ARGININE DEIMINASE"/>
    <property type="match status" value="1"/>
</dbReference>
<dbReference type="PANTHER" id="PTHR47271:SF2">
    <property type="entry name" value="ARGININE DEIMINASE"/>
    <property type="match status" value="1"/>
</dbReference>
<dbReference type="Pfam" id="PF02274">
    <property type="entry name" value="ADI"/>
    <property type="match status" value="1"/>
</dbReference>
<dbReference type="PIRSF" id="PIRSF006356">
    <property type="entry name" value="Arg_deiminase"/>
    <property type="match status" value="1"/>
</dbReference>
<dbReference type="PRINTS" id="PR01466">
    <property type="entry name" value="ARGDEIMINASE"/>
</dbReference>
<dbReference type="SUPFAM" id="SSF55909">
    <property type="entry name" value="Pentein"/>
    <property type="match status" value="1"/>
</dbReference>
<feature type="chain" id="PRO_1000005718" description="Arginine deiminase">
    <location>
        <begin position="1"/>
        <end position="402"/>
    </location>
</feature>
<feature type="active site" description="Amidino-cysteine intermediate" evidence="1">
    <location>
        <position position="392"/>
    </location>
</feature>
<gene>
    <name evidence="1" type="primary">arcA</name>
    <name type="ordered locus">MRA_1010</name>
</gene>
<proteinExistence type="inferred from homology"/>
<comment type="catalytic activity">
    <reaction evidence="1">
        <text>L-arginine + H2O = L-citrulline + NH4(+)</text>
        <dbReference type="Rhea" id="RHEA:19597"/>
        <dbReference type="ChEBI" id="CHEBI:15377"/>
        <dbReference type="ChEBI" id="CHEBI:28938"/>
        <dbReference type="ChEBI" id="CHEBI:32682"/>
        <dbReference type="ChEBI" id="CHEBI:57743"/>
        <dbReference type="EC" id="3.5.3.6"/>
    </reaction>
</comment>
<comment type="pathway">
    <text evidence="1">Amino-acid degradation; L-arginine degradation via ADI pathway; carbamoyl phosphate from L-arginine: step 1/2.</text>
</comment>
<comment type="subcellular location">
    <subcellularLocation>
        <location evidence="1">Cytoplasm</location>
    </subcellularLocation>
</comment>
<comment type="similarity">
    <text evidence="1">Belongs to the arginine deiminase family.</text>
</comment>
<organism>
    <name type="scientific">Mycobacterium tuberculosis (strain ATCC 25177 / H37Ra)</name>
    <dbReference type="NCBI Taxonomy" id="419947"/>
    <lineage>
        <taxon>Bacteria</taxon>
        <taxon>Bacillati</taxon>
        <taxon>Actinomycetota</taxon>
        <taxon>Actinomycetes</taxon>
        <taxon>Mycobacteriales</taxon>
        <taxon>Mycobacteriaceae</taxon>
        <taxon>Mycobacterium</taxon>
        <taxon>Mycobacterium tuberculosis complex</taxon>
    </lineage>
</organism>
<protein>
    <recommendedName>
        <fullName evidence="1">Arginine deiminase</fullName>
        <shortName evidence="1">ADI</shortName>
        <ecNumber evidence="1">3.5.3.6</ecNumber>
    </recommendedName>
    <alternativeName>
        <fullName evidence="1">Arginine dihydrolase</fullName>
        <shortName evidence="1">AD</shortName>
    </alternativeName>
</protein>
<accession>A5U144</accession>
<evidence type="ECO:0000255" key="1">
    <source>
        <dbReference type="HAMAP-Rule" id="MF_00242"/>
    </source>
</evidence>
<keyword id="KW-0056">Arginine metabolism</keyword>
<keyword id="KW-0963">Cytoplasm</keyword>
<keyword id="KW-0378">Hydrolase</keyword>
<keyword id="KW-1185">Reference proteome</keyword>